<gene>
    <name type="primary">CLF1</name>
    <name type="synonym">CCN1</name>
    <name type="ORF">CNAG_00694</name>
</gene>
<feature type="chain" id="PRO_0000205743" description="Pre-mRNA-splicing factor CLF1">
    <location>
        <begin position="1"/>
        <end position="724"/>
    </location>
</feature>
<feature type="repeat" description="HAT 1">
    <location>
        <begin position="55"/>
        <end position="87"/>
    </location>
</feature>
<feature type="repeat" description="HAT 2">
    <location>
        <begin position="89"/>
        <end position="121"/>
    </location>
</feature>
<feature type="repeat" description="HAT 3">
    <location>
        <begin position="123"/>
        <end position="155"/>
    </location>
</feature>
<feature type="repeat" description="HAT 4">
    <location>
        <begin position="157"/>
        <end position="188"/>
    </location>
</feature>
<feature type="repeat" description="HAT 5">
    <location>
        <begin position="190"/>
        <end position="221"/>
    </location>
</feature>
<feature type="repeat" description="HAT 6">
    <location>
        <begin position="223"/>
        <end position="262"/>
    </location>
</feature>
<feature type="repeat" description="HAT 7">
    <location>
        <begin position="264"/>
        <end position="298"/>
    </location>
</feature>
<feature type="repeat" description="HAT 8">
    <location>
        <begin position="308"/>
        <end position="340"/>
    </location>
</feature>
<feature type="repeat" description="HAT 9">
    <location>
        <begin position="352"/>
        <end position="386"/>
    </location>
</feature>
<feature type="repeat" description="HAT 10">
    <location>
        <begin position="396"/>
        <end position="432"/>
    </location>
</feature>
<feature type="repeat" description="HAT 11">
    <location>
        <begin position="434"/>
        <end position="465"/>
    </location>
</feature>
<feature type="repeat" description="HAT 12">
    <location>
        <begin position="467"/>
        <end position="499"/>
    </location>
</feature>
<feature type="repeat" description="HAT 13">
    <location>
        <begin position="501"/>
        <end position="534"/>
    </location>
</feature>
<feature type="repeat" description="HAT 14">
    <location>
        <begin position="536"/>
        <end position="567"/>
    </location>
</feature>
<feature type="repeat" description="HAT 15">
    <location>
        <begin position="585"/>
        <end position="626"/>
    </location>
</feature>
<feature type="repeat" description="HAT 16">
    <location>
        <begin position="635"/>
        <end position="667"/>
    </location>
</feature>
<feature type="region of interest" description="Disordered" evidence="2">
    <location>
        <begin position="681"/>
        <end position="724"/>
    </location>
</feature>
<feature type="compositionally biased region" description="Acidic residues" evidence="2">
    <location>
        <begin position="702"/>
        <end position="724"/>
    </location>
</feature>
<feature type="sequence variant" description="In strain: B-4551; no growth at 37 degrees Celsius and fails to cause systemic infection in mice." evidence="3">
    <location>
        <position position="217"/>
    </location>
</feature>
<proteinExistence type="inferred from homology"/>
<comment type="function">
    <text evidence="1">Involved in pre-mRNA splicing and cell cycle progression. Required for the spliceosome assembly and initiation of the DNA replication (By similarity).</text>
</comment>
<comment type="subunit">
    <text evidence="1">Associated with the spliceosome.</text>
</comment>
<comment type="subcellular location">
    <subcellularLocation>
        <location evidence="1">Nucleus</location>
    </subcellularLocation>
</comment>
<comment type="similarity">
    <text evidence="4">Belongs to the crooked-neck family.</text>
</comment>
<accession>Q9HF03</accession>
<accession>J9VFF4</accession>
<organism>
    <name type="scientific">Cryptococcus neoformans var. grubii serotype A (strain H99 / ATCC 208821 / CBS 10515 / FGSC 9487)</name>
    <name type="common">Filobasidiella neoformans var. grubii</name>
    <dbReference type="NCBI Taxonomy" id="235443"/>
    <lineage>
        <taxon>Eukaryota</taxon>
        <taxon>Fungi</taxon>
        <taxon>Dikarya</taxon>
        <taxon>Basidiomycota</taxon>
        <taxon>Agaricomycotina</taxon>
        <taxon>Tremellomycetes</taxon>
        <taxon>Tremellales</taxon>
        <taxon>Cryptococcaceae</taxon>
        <taxon>Cryptococcus</taxon>
        <taxon>Cryptococcus neoformans species complex</taxon>
    </lineage>
</organism>
<dbReference type="EMBL" id="AF265234">
    <property type="protein sequence ID" value="AAG36938.1"/>
    <property type="molecule type" value="Genomic_DNA"/>
</dbReference>
<dbReference type="EMBL" id="CP003820">
    <property type="protein sequence ID" value="AFR92823.1"/>
    <property type="molecule type" value="Genomic_DNA"/>
</dbReference>
<dbReference type="RefSeq" id="XP_012046896.1">
    <property type="nucleotide sequence ID" value="XM_012191506.1"/>
</dbReference>
<dbReference type="SMR" id="Q9HF03"/>
<dbReference type="GeneID" id="23884476"/>
<dbReference type="KEGG" id="cng:CNAG_00694"/>
<dbReference type="VEuPathDB" id="FungiDB:CNAG_00694"/>
<dbReference type="HOGENOM" id="CLU_011554_1_0_1"/>
<dbReference type="OrthoDB" id="5453at5206"/>
<dbReference type="PHI-base" id="PHI:280"/>
<dbReference type="Proteomes" id="UP000010091">
    <property type="component" value="Chromosome 1"/>
</dbReference>
<dbReference type="GO" id="GO:0071014">
    <property type="term" value="C:post-mRNA release spliceosomal complex"/>
    <property type="evidence" value="ECO:0007669"/>
    <property type="project" value="TreeGrafter"/>
</dbReference>
<dbReference type="GO" id="GO:0071011">
    <property type="term" value="C:precatalytic spliceosome"/>
    <property type="evidence" value="ECO:0007669"/>
    <property type="project" value="TreeGrafter"/>
</dbReference>
<dbReference type="GO" id="GO:0000974">
    <property type="term" value="C:Prp19 complex"/>
    <property type="evidence" value="ECO:0007669"/>
    <property type="project" value="TreeGrafter"/>
</dbReference>
<dbReference type="GO" id="GO:0071007">
    <property type="term" value="C:U2-type catalytic step 2 spliceosome"/>
    <property type="evidence" value="ECO:0007669"/>
    <property type="project" value="TreeGrafter"/>
</dbReference>
<dbReference type="GO" id="GO:0000245">
    <property type="term" value="P:spliceosomal complex assembly"/>
    <property type="evidence" value="ECO:0007669"/>
    <property type="project" value="TreeGrafter"/>
</dbReference>
<dbReference type="FunFam" id="1.25.40.10:FF:000327">
    <property type="entry name" value="Pre-mRNA-splicing factor CLF1"/>
    <property type="match status" value="1"/>
</dbReference>
<dbReference type="FunFam" id="1.25.40.10:FF:000639">
    <property type="entry name" value="Pre-mRNA-splicing factor CLF1"/>
    <property type="match status" value="1"/>
</dbReference>
<dbReference type="Gene3D" id="1.25.40.10">
    <property type="entry name" value="Tetratricopeptide repeat domain"/>
    <property type="match status" value="2"/>
</dbReference>
<dbReference type="InterPro" id="IPR003107">
    <property type="entry name" value="HAT"/>
</dbReference>
<dbReference type="InterPro" id="IPR055433">
    <property type="entry name" value="HAT_Syf1-like_N"/>
</dbReference>
<dbReference type="InterPro" id="IPR055430">
    <property type="entry name" value="HAT_Syf1_CNRKL1_C"/>
</dbReference>
<dbReference type="InterPro" id="IPR045075">
    <property type="entry name" value="Syf1-like"/>
</dbReference>
<dbReference type="InterPro" id="IPR011990">
    <property type="entry name" value="TPR-like_helical_dom_sf"/>
</dbReference>
<dbReference type="InterPro" id="IPR019734">
    <property type="entry name" value="TPR_rpt"/>
</dbReference>
<dbReference type="PANTHER" id="PTHR11246:SF3">
    <property type="entry name" value="CROOKED NECK-LIKE PROTEIN 1"/>
    <property type="match status" value="1"/>
</dbReference>
<dbReference type="PANTHER" id="PTHR11246">
    <property type="entry name" value="PRE-MRNA SPLICING FACTOR"/>
    <property type="match status" value="1"/>
</dbReference>
<dbReference type="Pfam" id="PF23231">
    <property type="entry name" value="HAT_Syf1_CNRKL1_C"/>
    <property type="match status" value="1"/>
</dbReference>
<dbReference type="Pfam" id="PF23233">
    <property type="entry name" value="HAT_Syf1_CNRKL1_N"/>
    <property type="match status" value="1"/>
</dbReference>
<dbReference type="SMART" id="SM00386">
    <property type="entry name" value="HAT"/>
    <property type="match status" value="14"/>
</dbReference>
<dbReference type="SUPFAM" id="SSF48452">
    <property type="entry name" value="TPR-like"/>
    <property type="match status" value="1"/>
</dbReference>
<reference key="1">
    <citation type="journal article" date="2003" name="Infect. Immun.">
        <title>Cryptococcus neoformans with a mutation in the tetratricopeptide repeat-containing gene, CCN1, causes subcutaneous lesions but fails to cause systemic infection.</title>
        <authorList>
            <person name="Chung S."/>
            <person name="Mondon P."/>
            <person name="Chang Y.C."/>
            <person name="Kwon-Chung K.J."/>
        </authorList>
    </citation>
    <scope>NUCLEOTIDE SEQUENCE [GENOMIC DNA]</scope>
    <scope>VARIANT LYS-217 DEL</scope>
    <source>
        <strain>B-4551</strain>
        <strain>H99 / ATCC 208821 / CBS 10515 / FGSC 9487</strain>
    </source>
</reference>
<reference key="2">
    <citation type="journal article" date="2014" name="PLoS Genet.">
        <title>Analysis of the genome and transcriptome of Cryptococcus neoformans var. grubii reveals complex RNA expression and microevolution leading to virulence attenuation.</title>
        <authorList>
            <person name="Janbon G."/>
            <person name="Ormerod K.L."/>
            <person name="Paulet D."/>
            <person name="Byrnes E.J. III"/>
            <person name="Yadav V."/>
            <person name="Chatterjee G."/>
            <person name="Mullapudi N."/>
            <person name="Hon C.-C."/>
            <person name="Billmyre R.B."/>
            <person name="Brunel F."/>
            <person name="Bahn Y.-S."/>
            <person name="Chen W."/>
            <person name="Chen Y."/>
            <person name="Chow E.W.L."/>
            <person name="Coppee J.-Y."/>
            <person name="Floyd-Averette A."/>
            <person name="Gaillardin C."/>
            <person name="Gerik K.J."/>
            <person name="Goldberg J."/>
            <person name="Gonzalez-Hilarion S."/>
            <person name="Gujja S."/>
            <person name="Hamlin J.L."/>
            <person name="Hsueh Y.-P."/>
            <person name="Ianiri G."/>
            <person name="Jones S."/>
            <person name="Kodira C.D."/>
            <person name="Kozubowski L."/>
            <person name="Lam W."/>
            <person name="Marra M."/>
            <person name="Mesner L.D."/>
            <person name="Mieczkowski P.A."/>
            <person name="Moyrand F."/>
            <person name="Nielsen K."/>
            <person name="Proux C."/>
            <person name="Rossignol T."/>
            <person name="Schein J.E."/>
            <person name="Sun S."/>
            <person name="Wollschlaeger C."/>
            <person name="Wood I.A."/>
            <person name="Zeng Q."/>
            <person name="Neuveglise C."/>
            <person name="Newlon C.S."/>
            <person name="Perfect J.R."/>
            <person name="Lodge J.K."/>
            <person name="Idnurm A."/>
            <person name="Stajich J.E."/>
            <person name="Kronstad J.W."/>
            <person name="Sanyal K."/>
            <person name="Heitman J."/>
            <person name="Fraser J.A."/>
            <person name="Cuomo C.A."/>
            <person name="Dietrich F.S."/>
        </authorList>
    </citation>
    <scope>NUCLEOTIDE SEQUENCE [LARGE SCALE GENOMIC DNA]</scope>
    <source>
        <strain>H99 / ATCC 208821 / CBS 10515 / FGSC 9487</strain>
    </source>
</reference>
<sequence length="724" mass="85483">MAGRDPRDRAPRVRNRAPAAVQITAEQLLREAQERQEPTIQAPKQRVQDLEELSEFQARKRTEFESRIRYSRDSILAWTKYAQWEASQNEYERSRSVFERALDVDPRSVDLWIKYTDMELKARNINHARNLFDRAITLLPRVDALWYKYVYLEELLLNVSGARQIFERWMQWEPNDKAWQSYIKLEERYNELDRASAIYERWIACRPIPKNWVAWAKFEEDRGQPDKAREVFQTALEFFGDEEEQVEKAQSVFAAFARMETRLKEFERARVIYKFALARLPRSKSASLYAQYTKFEKQHGDRAGVELTVLGKRRIQYEEELAYDPTNYDAWFSLARLEEDAYRADREDGEDVEPMRVREVYERAVANVPPALEKRYWRRYIYLWLQYAAFEEIDTKDYDRARDVYKAAVKLVPHKTFTFAKLWLAYAYFEIRRLDVSAARKVLGAGIGMCPKPKLFTGYIELEMRLREFDRVRTLYEKFLTYDPSLSSAWIQWTQVESAVEDFERVRAIFELAVQQSLDMPEIVWKAYIDFEAGEGERERARNLYERLLERTSHVKVWISYALMEIATLGGGEDEDGNEIEGEAGDADLARKVFERGYKDLRAKGEKEDRAVLLESWKSFEQEHGDEEMLAKVEDMLPTTRKRWRKAEDGSGELEEYWDLVFPDDEKEANPTSFKFFQAAQAWAQQRAGQGEEGGLSYDLPSDSESENEDEDGDNREEEGMDQD</sequence>
<evidence type="ECO:0000250" key="1"/>
<evidence type="ECO:0000256" key="2">
    <source>
        <dbReference type="SAM" id="MobiDB-lite"/>
    </source>
</evidence>
<evidence type="ECO:0000269" key="3">
    <source>
    </source>
</evidence>
<evidence type="ECO:0000305" key="4"/>
<keyword id="KW-0507">mRNA processing</keyword>
<keyword id="KW-0508">mRNA splicing</keyword>
<keyword id="KW-0539">Nucleus</keyword>
<keyword id="KW-0677">Repeat</keyword>
<keyword id="KW-0747">Spliceosome</keyword>
<protein>
    <recommendedName>
        <fullName>Pre-mRNA-splicing factor CLF1</fullName>
    </recommendedName>
    <alternativeName>
        <fullName>crooked-neck-like protein 1</fullName>
    </alternativeName>
</protein>
<name>CLF1_CRYNH</name>